<proteinExistence type="evidence at protein level"/>
<evidence type="ECO:0000250" key="1"/>
<evidence type="ECO:0000255" key="2"/>
<evidence type="ECO:0000255" key="3">
    <source>
        <dbReference type="PROSITE-ProRule" id="PRU00088"/>
    </source>
</evidence>
<evidence type="ECO:0000255" key="4">
    <source>
        <dbReference type="PROSITE-ProRule" id="PRU01266"/>
    </source>
</evidence>
<evidence type="ECO:0000256" key="5">
    <source>
        <dbReference type="SAM" id="MobiDB-lite"/>
    </source>
</evidence>
<evidence type="ECO:0000303" key="6">
    <source>
    </source>
</evidence>
<evidence type="ECO:0000305" key="7"/>
<reference key="1">
    <citation type="journal article" date="2005" name="Science">
        <title>The transcriptional landscape of the mammalian genome.</title>
        <authorList>
            <person name="Carninci P."/>
            <person name="Kasukawa T."/>
            <person name="Katayama S."/>
            <person name="Gough J."/>
            <person name="Frith M.C."/>
            <person name="Maeda N."/>
            <person name="Oyama R."/>
            <person name="Ravasi T."/>
            <person name="Lenhard B."/>
            <person name="Wells C."/>
            <person name="Kodzius R."/>
            <person name="Shimokawa K."/>
            <person name="Bajic V.B."/>
            <person name="Brenner S.E."/>
            <person name="Batalov S."/>
            <person name="Forrest A.R."/>
            <person name="Zavolan M."/>
            <person name="Davis M.J."/>
            <person name="Wilming L.G."/>
            <person name="Aidinis V."/>
            <person name="Allen J.E."/>
            <person name="Ambesi-Impiombato A."/>
            <person name="Apweiler R."/>
            <person name="Aturaliya R.N."/>
            <person name="Bailey T.L."/>
            <person name="Bansal M."/>
            <person name="Baxter L."/>
            <person name="Beisel K.W."/>
            <person name="Bersano T."/>
            <person name="Bono H."/>
            <person name="Chalk A.M."/>
            <person name="Chiu K.P."/>
            <person name="Choudhary V."/>
            <person name="Christoffels A."/>
            <person name="Clutterbuck D.R."/>
            <person name="Crowe M.L."/>
            <person name="Dalla E."/>
            <person name="Dalrymple B.P."/>
            <person name="de Bono B."/>
            <person name="Della Gatta G."/>
            <person name="di Bernardo D."/>
            <person name="Down T."/>
            <person name="Engstrom P."/>
            <person name="Fagiolini M."/>
            <person name="Faulkner G."/>
            <person name="Fletcher C.F."/>
            <person name="Fukushima T."/>
            <person name="Furuno M."/>
            <person name="Futaki S."/>
            <person name="Gariboldi M."/>
            <person name="Georgii-Hemming P."/>
            <person name="Gingeras T.R."/>
            <person name="Gojobori T."/>
            <person name="Green R.E."/>
            <person name="Gustincich S."/>
            <person name="Harbers M."/>
            <person name="Hayashi Y."/>
            <person name="Hensch T.K."/>
            <person name="Hirokawa N."/>
            <person name="Hill D."/>
            <person name="Huminiecki L."/>
            <person name="Iacono M."/>
            <person name="Ikeo K."/>
            <person name="Iwama A."/>
            <person name="Ishikawa T."/>
            <person name="Jakt M."/>
            <person name="Kanapin A."/>
            <person name="Katoh M."/>
            <person name="Kawasawa Y."/>
            <person name="Kelso J."/>
            <person name="Kitamura H."/>
            <person name="Kitano H."/>
            <person name="Kollias G."/>
            <person name="Krishnan S.P."/>
            <person name="Kruger A."/>
            <person name="Kummerfeld S.K."/>
            <person name="Kurochkin I.V."/>
            <person name="Lareau L.F."/>
            <person name="Lazarevic D."/>
            <person name="Lipovich L."/>
            <person name="Liu J."/>
            <person name="Liuni S."/>
            <person name="McWilliam S."/>
            <person name="Madan Babu M."/>
            <person name="Madera M."/>
            <person name="Marchionni L."/>
            <person name="Matsuda H."/>
            <person name="Matsuzawa S."/>
            <person name="Miki H."/>
            <person name="Mignone F."/>
            <person name="Miyake S."/>
            <person name="Morris K."/>
            <person name="Mottagui-Tabar S."/>
            <person name="Mulder N."/>
            <person name="Nakano N."/>
            <person name="Nakauchi H."/>
            <person name="Ng P."/>
            <person name="Nilsson R."/>
            <person name="Nishiguchi S."/>
            <person name="Nishikawa S."/>
            <person name="Nori F."/>
            <person name="Ohara O."/>
            <person name="Okazaki Y."/>
            <person name="Orlando V."/>
            <person name="Pang K.C."/>
            <person name="Pavan W.J."/>
            <person name="Pavesi G."/>
            <person name="Pesole G."/>
            <person name="Petrovsky N."/>
            <person name="Piazza S."/>
            <person name="Reed J."/>
            <person name="Reid J.F."/>
            <person name="Ring B.Z."/>
            <person name="Ringwald M."/>
            <person name="Rost B."/>
            <person name="Ruan Y."/>
            <person name="Salzberg S.L."/>
            <person name="Sandelin A."/>
            <person name="Schneider C."/>
            <person name="Schoenbach C."/>
            <person name="Sekiguchi K."/>
            <person name="Semple C.A."/>
            <person name="Seno S."/>
            <person name="Sessa L."/>
            <person name="Sheng Y."/>
            <person name="Shibata Y."/>
            <person name="Shimada H."/>
            <person name="Shimada K."/>
            <person name="Silva D."/>
            <person name="Sinclair B."/>
            <person name="Sperling S."/>
            <person name="Stupka E."/>
            <person name="Sugiura K."/>
            <person name="Sultana R."/>
            <person name="Takenaka Y."/>
            <person name="Taki K."/>
            <person name="Tammoja K."/>
            <person name="Tan S.L."/>
            <person name="Tang S."/>
            <person name="Taylor M.S."/>
            <person name="Tegner J."/>
            <person name="Teichmann S.A."/>
            <person name="Ueda H.R."/>
            <person name="van Nimwegen E."/>
            <person name="Verardo R."/>
            <person name="Wei C.L."/>
            <person name="Yagi K."/>
            <person name="Yamanishi H."/>
            <person name="Zabarovsky E."/>
            <person name="Zhu S."/>
            <person name="Zimmer A."/>
            <person name="Hide W."/>
            <person name="Bult C."/>
            <person name="Grimmond S.M."/>
            <person name="Teasdale R.D."/>
            <person name="Liu E.T."/>
            <person name="Brusic V."/>
            <person name="Quackenbush J."/>
            <person name="Wahlestedt C."/>
            <person name="Mattick J.S."/>
            <person name="Hume D.A."/>
            <person name="Kai C."/>
            <person name="Sasaki D."/>
            <person name="Tomaru Y."/>
            <person name="Fukuda S."/>
            <person name="Kanamori-Katayama M."/>
            <person name="Suzuki M."/>
            <person name="Aoki J."/>
            <person name="Arakawa T."/>
            <person name="Iida J."/>
            <person name="Imamura K."/>
            <person name="Itoh M."/>
            <person name="Kato T."/>
            <person name="Kawaji H."/>
            <person name="Kawagashira N."/>
            <person name="Kawashima T."/>
            <person name="Kojima M."/>
            <person name="Kondo S."/>
            <person name="Konno H."/>
            <person name="Nakano K."/>
            <person name="Ninomiya N."/>
            <person name="Nishio T."/>
            <person name="Okada M."/>
            <person name="Plessy C."/>
            <person name="Shibata K."/>
            <person name="Shiraki T."/>
            <person name="Suzuki S."/>
            <person name="Tagami M."/>
            <person name="Waki K."/>
            <person name="Watahiki A."/>
            <person name="Okamura-Oho Y."/>
            <person name="Suzuki H."/>
            <person name="Kawai J."/>
            <person name="Hayashizaki Y."/>
        </authorList>
    </citation>
    <scope>NUCLEOTIDE SEQUENCE [LARGE SCALE MRNA] (ISOFORMS 1 AND 2)</scope>
    <source>
        <strain>C57BL/6J</strain>
        <tissue>Hypothalamus</tissue>
    </source>
</reference>
<reference key="2">
    <citation type="journal article" date="2004" name="Genome Res.">
        <title>The status, quality, and expansion of the NIH full-length cDNA project: the Mammalian Gene Collection (MGC).</title>
        <authorList>
            <consortium name="The MGC Project Team"/>
        </authorList>
    </citation>
    <scope>NUCLEOTIDE SEQUENCE [LARGE SCALE MRNA] (ISOFORM 1)</scope>
    <source>
        <strain>C57BL/6J</strain>
        <strain>FVB/N</strain>
        <tissue>Brain</tissue>
        <tissue>Mammary tumor</tissue>
    </source>
</reference>
<reference key="3">
    <citation type="submission" date="2009-01" db="UniProtKB">
        <authorList>
            <person name="Lubec G."/>
            <person name="Sunyer B."/>
            <person name="Chen W.-Q."/>
        </authorList>
    </citation>
    <scope>PROTEIN SEQUENCE OF 159-165</scope>
    <scope>IDENTIFICATION BY MASS SPECTROMETRY</scope>
    <source>
        <strain>OF1</strain>
        <tissue>Hippocampus</tissue>
    </source>
</reference>
<reference key="4">
    <citation type="journal article" date="2010" name="Cell">
        <title>A tissue-specific atlas of mouse protein phosphorylation and expression.</title>
        <authorList>
            <person name="Huttlin E.L."/>
            <person name="Jedrychowski M.P."/>
            <person name="Elias J.E."/>
            <person name="Goswami T."/>
            <person name="Rad R."/>
            <person name="Beausoleil S.A."/>
            <person name="Villen J."/>
            <person name="Haas W."/>
            <person name="Sowa M.E."/>
            <person name="Gygi S.P."/>
        </authorList>
    </citation>
    <scope>IDENTIFICATION BY MASS SPECTROMETRY [LARGE SCALE ANALYSIS]</scope>
    <source>
        <tissue>Kidney</tissue>
    </source>
</reference>
<accession>Q8BJM7</accession>
<accession>Q3TRC5</accession>
<accession>Q8BLG4</accession>
<accession>Q8R0C7</accession>
<gene>
    <name type="primary">Tyw1</name>
    <name type="synonym">Rsafd1</name>
</gene>
<feature type="chain" id="PRO_0000281828" description="S-adenosyl-L-methionine-dependent tRNA 4-demethylwyosine synthase TYW1">
    <location>
        <begin position="1"/>
        <end position="721"/>
    </location>
</feature>
<feature type="domain" description="Flavodoxin-like" evidence="3">
    <location>
        <begin position="71"/>
        <end position="229"/>
    </location>
</feature>
<feature type="domain" description="Radical SAM core" evidence="4">
    <location>
        <begin position="389"/>
        <end position="635"/>
    </location>
</feature>
<feature type="region of interest" description="Disordered" evidence="5">
    <location>
        <begin position="242"/>
        <end position="291"/>
    </location>
</feature>
<feature type="region of interest" description="Disordered" evidence="5">
    <location>
        <begin position="305"/>
        <end position="339"/>
    </location>
</feature>
<feature type="compositionally biased region" description="Basic and acidic residues" evidence="5">
    <location>
        <begin position="250"/>
        <end position="274"/>
    </location>
</feature>
<feature type="compositionally biased region" description="Acidic residues" evidence="5">
    <location>
        <begin position="275"/>
        <end position="290"/>
    </location>
</feature>
<feature type="compositionally biased region" description="Basic and acidic residues" evidence="5">
    <location>
        <begin position="313"/>
        <end position="325"/>
    </location>
</feature>
<feature type="binding site" evidence="3">
    <location>
        <begin position="77"/>
        <end position="81"/>
    </location>
    <ligand>
        <name>FMN</name>
        <dbReference type="ChEBI" id="CHEBI:58210"/>
    </ligand>
</feature>
<feature type="binding site" evidence="3">
    <location>
        <begin position="168"/>
        <end position="200"/>
    </location>
    <ligand>
        <name>FMN</name>
        <dbReference type="ChEBI" id="CHEBI:58210"/>
    </ligand>
</feature>
<feature type="binding site" evidence="2">
    <location>
        <position position="405"/>
    </location>
    <ligand>
        <name>[4Fe-4S] cluster</name>
        <dbReference type="ChEBI" id="CHEBI:49883"/>
        <note>4Fe-4S-S-AdoMet</note>
    </ligand>
</feature>
<feature type="binding site" evidence="2">
    <location>
        <position position="409"/>
    </location>
    <ligand>
        <name>[4Fe-4S] cluster</name>
        <dbReference type="ChEBI" id="CHEBI:49883"/>
        <note>4Fe-4S-S-AdoMet</note>
    </ligand>
</feature>
<feature type="binding site" evidence="2">
    <location>
        <position position="412"/>
    </location>
    <ligand>
        <name>[4Fe-4S] cluster</name>
        <dbReference type="ChEBI" id="CHEBI:49883"/>
        <note>4Fe-4S-S-AdoMet</note>
    </ligand>
</feature>
<feature type="splice variant" id="VSP_024068" description="In isoform 2." evidence="6">
    <original>REKSHQDGKAAMQRNPEKTEDGEGRAMITPALREALTKQGYQLIGSHSGVKLCRWTKSMLRGRGGCYKH</original>
    <variation>TSCSALSSYSDSAMSHHNKEKSVRPPSLIQRLLQQVLSMTVGWRRRSSEDSQVQGTSSARKWRPGRRPL</variation>
    <location>
        <begin position="318"/>
        <end position="386"/>
    </location>
</feature>
<feature type="splice variant" id="VSP_024070" description="In isoform 2." evidence="6">
    <location>
        <begin position="387"/>
        <end position="721"/>
    </location>
</feature>
<dbReference type="EC" id="4.1.3.44"/>
<dbReference type="EMBL" id="AK045279">
    <property type="protein sequence ID" value="BAC32293.1"/>
    <property type="status" value="ALT_SEQ"/>
    <property type="molecule type" value="mRNA"/>
</dbReference>
<dbReference type="EMBL" id="AK082884">
    <property type="protein sequence ID" value="BAC38668.1"/>
    <property type="molecule type" value="mRNA"/>
</dbReference>
<dbReference type="EMBL" id="AK162899">
    <property type="protein sequence ID" value="BAE37105.1"/>
    <property type="molecule type" value="mRNA"/>
</dbReference>
<dbReference type="EMBL" id="BC027065">
    <property type="protein sequence ID" value="AAH27065.1"/>
    <property type="molecule type" value="mRNA"/>
</dbReference>
<dbReference type="EMBL" id="BC068126">
    <property type="protein sequence ID" value="AAH68126.1"/>
    <property type="molecule type" value="mRNA"/>
</dbReference>
<dbReference type="CCDS" id="CCDS19712.1">
    <molecule id="Q8BJM7-1"/>
</dbReference>
<dbReference type="RefSeq" id="NP_001015876.1">
    <molecule id="Q8BJM7-1"/>
    <property type="nucleotide sequence ID" value="NM_001015876.3"/>
</dbReference>
<dbReference type="RefSeq" id="NP_001411703.1">
    <molecule id="Q8BJM7-1"/>
    <property type="nucleotide sequence ID" value="NM_001424774.1"/>
</dbReference>
<dbReference type="RefSeq" id="NP_001411709.1">
    <molecule id="Q8BJM7-3"/>
    <property type="nucleotide sequence ID" value="NM_001424780.1"/>
</dbReference>
<dbReference type="RefSeq" id="NP_849228.1">
    <property type="nucleotide sequence ID" value="NM_178897.4"/>
</dbReference>
<dbReference type="RefSeq" id="XP_006504394.1">
    <property type="nucleotide sequence ID" value="XM_006504331.2"/>
</dbReference>
<dbReference type="SMR" id="Q8BJM7"/>
<dbReference type="BioGRID" id="221556">
    <property type="interactions" value="3"/>
</dbReference>
<dbReference type="FunCoup" id="Q8BJM7">
    <property type="interactions" value="1923"/>
</dbReference>
<dbReference type="IntAct" id="Q8BJM7">
    <property type="interactions" value="1"/>
</dbReference>
<dbReference type="STRING" id="10090.ENSMUSP00000037173"/>
<dbReference type="GlyGen" id="Q8BJM7">
    <property type="glycosylation" value="1 site"/>
</dbReference>
<dbReference type="iPTMnet" id="Q8BJM7"/>
<dbReference type="PhosphoSitePlus" id="Q8BJM7"/>
<dbReference type="SwissPalm" id="Q8BJM7"/>
<dbReference type="PaxDb" id="10090-ENSMUSP00000037173"/>
<dbReference type="PeptideAtlas" id="Q8BJM7"/>
<dbReference type="ProteomicsDB" id="297683">
    <molecule id="Q8BJM7-1"/>
</dbReference>
<dbReference type="ProteomicsDB" id="297684">
    <molecule id="Q8BJM7-3"/>
</dbReference>
<dbReference type="Pumba" id="Q8BJM7"/>
<dbReference type="DNASU" id="100929"/>
<dbReference type="Ensembl" id="ENSMUST00000040213.13">
    <molecule id="Q8BJM7-1"/>
    <property type="protein sequence ID" value="ENSMUSP00000037173.7"/>
    <property type="gene ID" value="ENSMUSG00000056310.15"/>
</dbReference>
<dbReference type="Ensembl" id="ENSMUST00000100662.10">
    <molecule id="Q8BJM7-3"/>
    <property type="protein sequence ID" value="ENSMUSP00000098226.4"/>
    <property type="gene ID" value="ENSMUSG00000056310.15"/>
</dbReference>
<dbReference type="GeneID" id="100929"/>
<dbReference type="KEGG" id="mmu:100929"/>
<dbReference type="UCSC" id="uc008zul.2">
    <molecule id="Q8BJM7-1"/>
    <property type="organism name" value="mouse"/>
</dbReference>
<dbReference type="AGR" id="MGI:2141161"/>
<dbReference type="CTD" id="55253"/>
<dbReference type="MGI" id="MGI:2141161">
    <property type="gene designation" value="Tyw1"/>
</dbReference>
<dbReference type="VEuPathDB" id="HostDB:ENSMUSG00000056310"/>
<dbReference type="eggNOG" id="KOG1160">
    <property type="taxonomic scope" value="Eukaryota"/>
</dbReference>
<dbReference type="GeneTree" id="ENSGT00510000047059"/>
<dbReference type="HOGENOM" id="CLU_007952_2_0_1"/>
<dbReference type="InParanoid" id="Q8BJM7"/>
<dbReference type="OMA" id="TMANIPW"/>
<dbReference type="OrthoDB" id="271553at2759"/>
<dbReference type="PhylomeDB" id="Q8BJM7"/>
<dbReference type="TreeFam" id="TF300773"/>
<dbReference type="UniPathway" id="UPA00375"/>
<dbReference type="BioGRID-ORCS" id="100929">
    <property type="hits" value="0 hits in 76 CRISPR screens"/>
</dbReference>
<dbReference type="ChiTaRS" id="Tyw1">
    <property type="organism name" value="mouse"/>
</dbReference>
<dbReference type="PRO" id="PR:Q8BJM7"/>
<dbReference type="Proteomes" id="UP000000589">
    <property type="component" value="Chromosome 5"/>
</dbReference>
<dbReference type="RNAct" id="Q8BJM7">
    <property type="molecule type" value="protein"/>
</dbReference>
<dbReference type="Bgee" id="ENSMUSG00000056310">
    <property type="expression patterns" value="Expressed in ear vesicle and 207 other cell types or tissues"/>
</dbReference>
<dbReference type="ExpressionAtlas" id="Q8BJM7">
    <property type="expression patterns" value="baseline and differential"/>
</dbReference>
<dbReference type="GO" id="GO:0051539">
    <property type="term" value="F:4 iron, 4 sulfur cluster binding"/>
    <property type="evidence" value="ECO:0007669"/>
    <property type="project" value="UniProtKB-KW"/>
</dbReference>
<dbReference type="GO" id="GO:0010181">
    <property type="term" value="F:FMN binding"/>
    <property type="evidence" value="ECO:0007669"/>
    <property type="project" value="InterPro"/>
</dbReference>
<dbReference type="GO" id="GO:0046872">
    <property type="term" value="F:metal ion binding"/>
    <property type="evidence" value="ECO:0007669"/>
    <property type="project" value="UniProtKB-KW"/>
</dbReference>
<dbReference type="GO" id="GO:0102521">
    <property type="term" value="F:tRNA-4-demethylwyosine synthase activity"/>
    <property type="evidence" value="ECO:0007669"/>
    <property type="project" value="UniProtKB-EC"/>
</dbReference>
<dbReference type="GO" id="GO:0008033">
    <property type="term" value="P:tRNA processing"/>
    <property type="evidence" value="ECO:0007669"/>
    <property type="project" value="UniProtKB-KW"/>
</dbReference>
<dbReference type="CDD" id="cd01335">
    <property type="entry name" value="Radical_SAM"/>
    <property type="match status" value="1"/>
</dbReference>
<dbReference type="FunFam" id="3.20.20.70:FF:000196">
    <property type="entry name" value="S-adenosyl-L-methionine-dependent tRNA 4-demethylwyosine synthase"/>
    <property type="match status" value="1"/>
</dbReference>
<dbReference type="Gene3D" id="3.40.50.360">
    <property type="match status" value="1"/>
</dbReference>
<dbReference type="Gene3D" id="3.20.20.70">
    <property type="entry name" value="Aldolase class I"/>
    <property type="match status" value="1"/>
</dbReference>
<dbReference type="InterPro" id="IPR013785">
    <property type="entry name" value="Aldolase_TIM"/>
</dbReference>
<dbReference type="InterPro" id="IPR001094">
    <property type="entry name" value="Flavdoxin-like"/>
</dbReference>
<dbReference type="InterPro" id="IPR008254">
    <property type="entry name" value="Flavodoxin/NO_synth"/>
</dbReference>
<dbReference type="InterPro" id="IPR029039">
    <property type="entry name" value="Flavoprotein-like_sf"/>
</dbReference>
<dbReference type="InterPro" id="IPR007197">
    <property type="entry name" value="rSAM"/>
</dbReference>
<dbReference type="InterPro" id="IPR013917">
    <property type="entry name" value="tRNA_wybutosine-synth"/>
</dbReference>
<dbReference type="InterPro" id="IPR034556">
    <property type="entry name" value="tRNA_wybutosine-synthase"/>
</dbReference>
<dbReference type="PANTHER" id="PTHR13930">
    <property type="entry name" value="S-ADENOSYL-L-METHIONINE-DEPENDENT TRNA 4-DEMETHYLWYOSINE SYNTHASE"/>
    <property type="match status" value="1"/>
</dbReference>
<dbReference type="PANTHER" id="PTHR13930:SF0">
    <property type="entry name" value="S-ADENOSYL-L-METHIONINE-DEPENDENT TRNA 4-DEMETHYLWYOSINE SYNTHASE TYW1-RELATED"/>
    <property type="match status" value="1"/>
</dbReference>
<dbReference type="Pfam" id="PF00258">
    <property type="entry name" value="Flavodoxin_1"/>
    <property type="match status" value="1"/>
</dbReference>
<dbReference type="Pfam" id="PF04055">
    <property type="entry name" value="Radical_SAM"/>
    <property type="match status" value="1"/>
</dbReference>
<dbReference type="Pfam" id="PF08608">
    <property type="entry name" value="Wyosine_form"/>
    <property type="match status" value="1"/>
</dbReference>
<dbReference type="PRINTS" id="PR00369">
    <property type="entry name" value="FLAVODOXIN"/>
</dbReference>
<dbReference type="SFLD" id="SFLDS00029">
    <property type="entry name" value="Radical_SAM"/>
    <property type="match status" value="1"/>
</dbReference>
<dbReference type="SFLD" id="SFLDF00284">
    <property type="entry name" value="tRNA_wybutosine-synthesizing"/>
    <property type="match status" value="1"/>
</dbReference>
<dbReference type="SUPFAM" id="SSF52218">
    <property type="entry name" value="Flavoproteins"/>
    <property type="match status" value="1"/>
</dbReference>
<dbReference type="SUPFAM" id="SSF102114">
    <property type="entry name" value="Radical SAM enzymes"/>
    <property type="match status" value="1"/>
</dbReference>
<dbReference type="PROSITE" id="PS50902">
    <property type="entry name" value="FLAVODOXIN_LIKE"/>
    <property type="match status" value="1"/>
</dbReference>
<dbReference type="PROSITE" id="PS51918">
    <property type="entry name" value="RADICAL_SAM"/>
    <property type="match status" value="1"/>
</dbReference>
<keyword id="KW-0004">4Fe-4S</keyword>
<keyword id="KW-0025">Alternative splicing</keyword>
<keyword id="KW-0903">Direct protein sequencing</keyword>
<keyword id="KW-0408">Iron</keyword>
<keyword id="KW-0411">Iron-sulfur</keyword>
<keyword id="KW-0456">Lyase</keyword>
<keyword id="KW-0479">Metal-binding</keyword>
<keyword id="KW-0547">Nucleotide-binding</keyword>
<keyword id="KW-1185">Reference proteome</keyword>
<keyword id="KW-0949">S-adenosyl-L-methionine</keyword>
<keyword id="KW-0819">tRNA processing</keyword>
<sequence>MGPLDVWDLSPLLSLWMNRFYIYMGCALGLTLCICVQIIKKQVTRSQEKRVPGAPDSSLSPQKKQTHVSGVKIFYGSQTGTAKGFAVVLAKAVTSLDLPVAIINLKEYDPDDSLIGEITSKTVCAFLVATYTDGCPTESAEWFCKWLEESANDFRFGKTYLKGLRYAVFGLGDSAYRSHFNKVSTNVDKWLWMLGAQRVLTRGEGDCNAVQSKHGSIEADFTAWKTKFISRLQALQRGEKKACGGNCKRGKCESAQHGPGEARPHPQGELHPGDAEEEEPCESSSEDELGTQDYQSLTSVVDVEDLGNIMNPVKREKREKSHQDGKAAMQRNPEKTEDGEGRAMITPALREALTKQGYQLIGSHSGVKLCRWTKSMLRGRGGCYKHTFYGIESHRCMEATPSLACANKCVFCWRHHTNPVGTEWRWKMDQPELILKEAIENHQNMIKQFKGVPGLKAERFEEGMEVKHCALSLVGEPIMYPEINRLLKLLHQHGISSFLVTNAQFPEEIRKLTPVTQLYVSVDASTRDGLKKIDRPLFKDFWQRFLDSLKALSAKQQRTVYRLTLVKCWNVDELQAYAELVSLGNPDFIEVKGVTYCGESAASSLTMANVPWHEEVVRFVRELVDLLPDYEVACEHEHSNCLLIGHKKFKIDGEWWTWINYSRFQELVLQYEESGGSKTFSSRDYMARTPQWALFGARERGFDPKDTRYQRKNKTKDISGC</sequence>
<protein>
    <recommendedName>
        <fullName>S-adenosyl-L-methionine-dependent tRNA 4-demethylwyosine synthase TYW1</fullName>
        <ecNumber>4.1.3.44</ecNumber>
    </recommendedName>
    <alternativeName>
        <fullName>Radical S-adenosyl methionine and flavodoxin domain-containing protein 1</fullName>
    </alternativeName>
    <alternativeName>
        <fullName>tRNA wybutosine-synthesizing protein 1 homolog</fullName>
    </alternativeName>
    <alternativeName>
        <fullName>tRNA-yW-synthesizing protein</fullName>
    </alternativeName>
</protein>
<comment type="function">
    <text evidence="1">Probable component of the wybutosine biosynthesis pathway. Wybutosine is a hyper modified guanosine with a tricyclic base found at the 3'-position adjacent to the anticodon of eukaryotic phenylalanine tRNA. Catalyzes the condensation of N-methylguanine with 2 carbon atoms from pyruvate to form the tricyclic 4-demethylwyosine, an intermediate in wybutosine biosynthesis (By similarity).</text>
</comment>
<comment type="catalytic activity">
    <reaction>
        <text>N(1)-methylguanosine(37) in tRNA(Phe) + pyruvate + S-adenosyl-L-methionine = 4-demethylwyosine(37) in tRNA(Phe) + 5'-deoxyadenosine + L-methionine + CO2 + H2O</text>
        <dbReference type="Rhea" id="RHEA:36347"/>
        <dbReference type="Rhea" id="RHEA-COMP:10164"/>
        <dbReference type="Rhea" id="RHEA-COMP:10165"/>
        <dbReference type="ChEBI" id="CHEBI:15361"/>
        <dbReference type="ChEBI" id="CHEBI:15377"/>
        <dbReference type="ChEBI" id="CHEBI:16526"/>
        <dbReference type="ChEBI" id="CHEBI:17319"/>
        <dbReference type="ChEBI" id="CHEBI:57844"/>
        <dbReference type="ChEBI" id="CHEBI:59789"/>
        <dbReference type="ChEBI" id="CHEBI:64315"/>
        <dbReference type="ChEBI" id="CHEBI:73542"/>
        <dbReference type="EC" id="4.1.3.44"/>
    </reaction>
</comment>
<comment type="cofactor">
    <cofactor evidence="1">
        <name>[4Fe-4S] cluster</name>
        <dbReference type="ChEBI" id="CHEBI:49883"/>
    </cofactor>
    <text evidence="1">Binds 1 [4Fe-4S] cluster. The cluster is coordinated with 3 cysteines and an exchangeable S-adenosyl-L-methionine.</text>
</comment>
<comment type="pathway">
    <text>tRNA modification; wybutosine-tRNA(Phe) biosynthesis.</text>
</comment>
<comment type="alternative products">
    <event type="alternative splicing"/>
    <isoform>
        <id>Q8BJM7-1</id>
        <name>1</name>
        <sequence type="displayed"/>
    </isoform>
    <isoform>
        <id>Q8BJM7-3</id>
        <name>2</name>
        <sequence type="described" ref="VSP_024068 VSP_024070"/>
    </isoform>
</comment>
<comment type="similarity">
    <text evidence="7">Belongs to the TYW1 family.</text>
</comment>
<comment type="sequence caution" evidence="7">
    <conflict type="miscellaneous discrepancy">
        <sequence resource="EMBL-CDS" id="BAC32293"/>
    </conflict>
    <text>Probable cloning artifact.</text>
</comment>
<name>TYW1_MOUSE</name>
<organism>
    <name type="scientific">Mus musculus</name>
    <name type="common">Mouse</name>
    <dbReference type="NCBI Taxonomy" id="10090"/>
    <lineage>
        <taxon>Eukaryota</taxon>
        <taxon>Metazoa</taxon>
        <taxon>Chordata</taxon>
        <taxon>Craniata</taxon>
        <taxon>Vertebrata</taxon>
        <taxon>Euteleostomi</taxon>
        <taxon>Mammalia</taxon>
        <taxon>Eutheria</taxon>
        <taxon>Euarchontoglires</taxon>
        <taxon>Glires</taxon>
        <taxon>Rodentia</taxon>
        <taxon>Myomorpha</taxon>
        <taxon>Muroidea</taxon>
        <taxon>Muridae</taxon>
        <taxon>Murinae</taxon>
        <taxon>Mus</taxon>
        <taxon>Mus</taxon>
    </lineage>
</organism>